<feature type="chain" id="PRO_1000051072" description="Small ribosomal subunit protein uS19">
    <location>
        <begin position="1"/>
        <end position="92"/>
    </location>
</feature>
<sequence>MARSVKKGPFLDDFLVKKVDVLREGSRKELIKTWSRRSTIIHEFVGYTFGVHNGRKFIPVLVTENMVGHKLGEFAPTRTYYGHGVDKKAKRR</sequence>
<accession>A0L5X7</accession>
<organism>
    <name type="scientific">Magnetococcus marinus (strain ATCC BAA-1437 / JCM 17883 / MC-1)</name>
    <dbReference type="NCBI Taxonomy" id="156889"/>
    <lineage>
        <taxon>Bacteria</taxon>
        <taxon>Pseudomonadati</taxon>
        <taxon>Pseudomonadota</taxon>
        <taxon>Alphaproteobacteria</taxon>
        <taxon>Magnetococcales</taxon>
        <taxon>Magnetococcaceae</taxon>
        <taxon>Magnetococcus</taxon>
    </lineage>
</organism>
<name>RS19_MAGMM</name>
<comment type="function">
    <text evidence="1">Protein S19 forms a complex with S13 that binds strongly to the 16S ribosomal RNA.</text>
</comment>
<comment type="similarity">
    <text evidence="1">Belongs to the universal ribosomal protein uS19 family.</text>
</comment>
<evidence type="ECO:0000255" key="1">
    <source>
        <dbReference type="HAMAP-Rule" id="MF_00531"/>
    </source>
</evidence>
<evidence type="ECO:0000305" key="2"/>
<keyword id="KW-1185">Reference proteome</keyword>
<keyword id="KW-0687">Ribonucleoprotein</keyword>
<keyword id="KW-0689">Ribosomal protein</keyword>
<keyword id="KW-0694">RNA-binding</keyword>
<keyword id="KW-0699">rRNA-binding</keyword>
<protein>
    <recommendedName>
        <fullName evidence="1">Small ribosomal subunit protein uS19</fullName>
    </recommendedName>
    <alternativeName>
        <fullName evidence="2">30S ribosomal protein S19</fullName>
    </alternativeName>
</protein>
<proteinExistence type="inferred from homology"/>
<reference key="1">
    <citation type="journal article" date="2009" name="Appl. Environ. Microbiol.">
        <title>Complete genome sequence of the chemolithoautotrophic marine magnetotactic coccus strain MC-1.</title>
        <authorList>
            <person name="Schubbe S."/>
            <person name="Williams T.J."/>
            <person name="Xie G."/>
            <person name="Kiss H.E."/>
            <person name="Brettin T.S."/>
            <person name="Martinez D."/>
            <person name="Ross C.A."/>
            <person name="Schuler D."/>
            <person name="Cox B.L."/>
            <person name="Nealson K.H."/>
            <person name="Bazylinski D.A."/>
        </authorList>
    </citation>
    <scope>NUCLEOTIDE SEQUENCE [LARGE SCALE GENOMIC DNA]</scope>
    <source>
        <strain>ATCC BAA-1437 / JCM 17883 / MC-1</strain>
    </source>
</reference>
<dbReference type="EMBL" id="CP000471">
    <property type="protein sequence ID" value="ABK43370.1"/>
    <property type="molecule type" value="Genomic_DNA"/>
</dbReference>
<dbReference type="RefSeq" id="WP_011712529.1">
    <property type="nucleotide sequence ID" value="NC_008576.1"/>
</dbReference>
<dbReference type="SMR" id="A0L5X7"/>
<dbReference type="STRING" id="156889.Mmc1_0851"/>
<dbReference type="KEGG" id="mgm:Mmc1_0851"/>
<dbReference type="eggNOG" id="COG0185">
    <property type="taxonomic scope" value="Bacteria"/>
</dbReference>
<dbReference type="HOGENOM" id="CLU_144911_0_1_5"/>
<dbReference type="OrthoDB" id="9797833at2"/>
<dbReference type="Proteomes" id="UP000002586">
    <property type="component" value="Chromosome"/>
</dbReference>
<dbReference type="GO" id="GO:0005737">
    <property type="term" value="C:cytoplasm"/>
    <property type="evidence" value="ECO:0007669"/>
    <property type="project" value="UniProtKB-ARBA"/>
</dbReference>
<dbReference type="GO" id="GO:0015935">
    <property type="term" value="C:small ribosomal subunit"/>
    <property type="evidence" value="ECO:0007669"/>
    <property type="project" value="InterPro"/>
</dbReference>
<dbReference type="GO" id="GO:0019843">
    <property type="term" value="F:rRNA binding"/>
    <property type="evidence" value="ECO:0007669"/>
    <property type="project" value="UniProtKB-UniRule"/>
</dbReference>
<dbReference type="GO" id="GO:0003735">
    <property type="term" value="F:structural constituent of ribosome"/>
    <property type="evidence" value="ECO:0007669"/>
    <property type="project" value="InterPro"/>
</dbReference>
<dbReference type="GO" id="GO:0000028">
    <property type="term" value="P:ribosomal small subunit assembly"/>
    <property type="evidence" value="ECO:0007669"/>
    <property type="project" value="TreeGrafter"/>
</dbReference>
<dbReference type="GO" id="GO:0006412">
    <property type="term" value="P:translation"/>
    <property type="evidence" value="ECO:0007669"/>
    <property type="project" value="UniProtKB-UniRule"/>
</dbReference>
<dbReference type="FunFam" id="3.30.860.10:FF:000001">
    <property type="entry name" value="30S ribosomal protein S19"/>
    <property type="match status" value="1"/>
</dbReference>
<dbReference type="Gene3D" id="3.30.860.10">
    <property type="entry name" value="30s Ribosomal Protein S19, Chain A"/>
    <property type="match status" value="1"/>
</dbReference>
<dbReference type="HAMAP" id="MF_00531">
    <property type="entry name" value="Ribosomal_uS19"/>
    <property type="match status" value="1"/>
</dbReference>
<dbReference type="InterPro" id="IPR002222">
    <property type="entry name" value="Ribosomal_uS19"/>
</dbReference>
<dbReference type="InterPro" id="IPR005732">
    <property type="entry name" value="Ribosomal_uS19_bac-type"/>
</dbReference>
<dbReference type="InterPro" id="IPR020934">
    <property type="entry name" value="Ribosomal_uS19_CS"/>
</dbReference>
<dbReference type="InterPro" id="IPR023575">
    <property type="entry name" value="Ribosomal_uS19_SF"/>
</dbReference>
<dbReference type="NCBIfam" id="TIGR01050">
    <property type="entry name" value="rpsS_bact"/>
    <property type="match status" value="1"/>
</dbReference>
<dbReference type="PANTHER" id="PTHR11880">
    <property type="entry name" value="RIBOSOMAL PROTEIN S19P FAMILY MEMBER"/>
    <property type="match status" value="1"/>
</dbReference>
<dbReference type="PANTHER" id="PTHR11880:SF8">
    <property type="entry name" value="SMALL RIBOSOMAL SUBUNIT PROTEIN US19M"/>
    <property type="match status" value="1"/>
</dbReference>
<dbReference type="Pfam" id="PF00203">
    <property type="entry name" value="Ribosomal_S19"/>
    <property type="match status" value="1"/>
</dbReference>
<dbReference type="PIRSF" id="PIRSF002144">
    <property type="entry name" value="Ribosomal_S19"/>
    <property type="match status" value="1"/>
</dbReference>
<dbReference type="PRINTS" id="PR00975">
    <property type="entry name" value="RIBOSOMALS19"/>
</dbReference>
<dbReference type="SUPFAM" id="SSF54570">
    <property type="entry name" value="Ribosomal protein S19"/>
    <property type="match status" value="1"/>
</dbReference>
<dbReference type="PROSITE" id="PS00323">
    <property type="entry name" value="RIBOSOMAL_S19"/>
    <property type="match status" value="1"/>
</dbReference>
<gene>
    <name evidence="1" type="primary">rpsS</name>
    <name type="ordered locus">Mmc1_0851</name>
</gene>